<gene>
    <name evidence="1" type="primary">ribH</name>
    <name type="ordered locus">Xfasm12_1905</name>
</gene>
<feature type="chain" id="PRO_1000098254" description="6,7-dimethyl-8-ribityllumazine synthase">
    <location>
        <begin position="1"/>
        <end position="154"/>
    </location>
</feature>
<feature type="active site" description="Proton donor" evidence="1">
    <location>
        <position position="88"/>
    </location>
</feature>
<feature type="binding site" evidence="1">
    <location>
        <position position="22"/>
    </location>
    <ligand>
        <name>5-amino-6-(D-ribitylamino)uracil</name>
        <dbReference type="ChEBI" id="CHEBI:15934"/>
    </ligand>
</feature>
<feature type="binding site" evidence="1">
    <location>
        <begin position="56"/>
        <end position="58"/>
    </location>
    <ligand>
        <name>5-amino-6-(D-ribitylamino)uracil</name>
        <dbReference type="ChEBI" id="CHEBI:15934"/>
    </ligand>
</feature>
<feature type="binding site" evidence="1">
    <location>
        <begin position="80"/>
        <end position="82"/>
    </location>
    <ligand>
        <name>5-amino-6-(D-ribitylamino)uracil</name>
        <dbReference type="ChEBI" id="CHEBI:15934"/>
    </ligand>
</feature>
<feature type="binding site" evidence="1">
    <location>
        <begin position="85"/>
        <end position="86"/>
    </location>
    <ligand>
        <name>(2S)-2-hydroxy-3-oxobutyl phosphate</name>
        <dbReference type="ChEBI" id="CHEBI:58830"/>
    </ligand>
</feature>
<feature type="binding site" evidence="1">
    <location>
        <position position="113"/>
    </location>
    <ligand>
        <name>5-amino-6-(D-ribitylamino)uracil</name>
        <dbReference type="ChEBI" id="CHEBI:15934"/>
    </ligand>
</feature>
<feature type="binding site" evidence="1">
    <location>
        <position position="127"/>
    </location>
    <ligand>
        <name>(2S)-2-hydroxy-3-oxobutyl phosphate</name>
        <dbReference type="ChEBI" id="CHEBI:58830"/>
    </ligand>
</feature>
<sequence length="154" mass="16165">MSHYEGDLRPAGARFVIVCSRWNARITDALVAGACHSLVDNGVPDDAVDVVRVPGAWEIPIVANLLAQAGQHAAIIALGCVVRGDTRHYEHVADLCAEGMMSVQMQTGVPVLNGVLAVECIKDAEMRAGGSHGNKGAETALAALEMVSLLEKLP</sequence>
<protein>
    <recommendedName>
        <fullName evidence="1">6,7-dimethyl-8-ribityllumazine synthase</fullName>
        <shortName evidence="1">DMRL synthase</shortName>
        <shortName evidence="1">LS</shortName>
        <shortName evidence="1">Lumazine synthase</shortName>
        <ecNumber evidence="1">2.5.1.78</ecNumber>
    </recommendedName>
</protein>
<keyword id="KW-0686">Riboflavin biosynthesis</keyword>
<keyword id="KW-0808">Transferase</keyword>
<accession>B0U4K3</accession>
<organism>
    <name type="scientific">Xylella fastidiosa (strain M12)</name>
    <dbReference type="NCBI Taxonomy" id="405440"/>
    <lineage>
        <taxon>Bacteria</taxon>
        <taxon>Pseudomonadati</taxon>
        <taxon>Pseudomonadota</taxon>
        <taxon>Gammaproteobacteria</taxon>
        <taxon>Lysobacterales</taxon>
        <taxon>Lysobacteraceae</taxon>
        <taxon>Xylella</taxon>
    </lineage>
</organism>
<evidence type="ECO:0000255" key="1">
    <source>
        <dbReference type="HAMAP-Rule" id="MF_00178"/>
    </source>
</evidence>
<comment type="function">
    <text evidence="1">Catalyzes the formation of 6,7-dimethyl-8-ribityllumazine by condensation of 5-amino-6-(D-ribitylamino)uracil with 3,4-dihydroxy-2-butanone 4-phosphate. This is the penultimate step in the biosynthesis of riboflavin.</text>
</comment>
<comment type="catalytic activity">
    <reaction evidence="1">
        <text>(2S)-2-hydroxy-3-oxobutyl phosphate + 5-amino-6-(D-ribitylamino)uracil = 6,7-dimethyl-8-(1-D-ribityl)lumazine + phosphate + 2 H2O + H(+)</text>
        <dbReference type="Rhea" id="RHEA:26152"/>
        <dbReference type="ChEBI" id="CHEBI:15377"/>
        <dbReference type="ChEBI" id="CHEBI:15378"/>
        <dbReference type="ChEBI" id="CHEBI:15934"/>
        <dbReference type="ChEBI" id="CHEBI:43474"/>
        <dbReference type="ChEBI" id="CHEBI:58201"/>
        <dbReference type="ChEBI" id="CHEBI:58830"/>
        <dbReference type="EC" id="2.5.1.78"/>
    </reaction>
</comment>
<comment type="pathway">
    <text evidence="1">Cofactor biosynthesis; riboflavin biosynthesis; riboflavin from 2-hydroxy-3-oxobutyl phosphate and 5-amino-6-(D-ribitylamino)uracil: step 1/2.</text>
</comment>
<comment type="subunit">
    <text evidence="1">Forms an icosahedral capsid composed of 60 subunits, arranged as a dodecamer of pentamers.</text>
</comment>
<comment type="similarity">
    <text evidence="1">Belongs to the DMRL synthase family.</text>
</comment>
<name>RISB_XYLFM</name>
<reference key="1">
    <citation type="journal article" date="2010" name="J. Bacteriol.">
        <title>Whole genome sequences of two Xylella fastidiosa strains (M12 and M23) causing almond leaf scorch disease in California.</title>
        <authorList>
            <person name="Chen J."/>
            <person name="Xie G."/>
            <person name="Han S."/>
            <person name="Chertkov O."/>
            <person name="Sims D."/>
            <person name="Civerolo E.L."/>
        </authorList>
    </citation>
    <scope>NUCLEOTIDE SEQUENCE [LARGE SCALE GENOMIC DNA]</scope>
    <source>
        <strain>M12</strain>
    </source>
</reference>
<dbReference type="EC" id="2.5.1.78" evidence="1"/>
<dbReference type="EMBL" id="CP000941">
    <property type="protein sequence ID" value="ACA12782.1"/>
    <property type="molecule type" value="Genomic_DNA"/>
</dbReference>
<dbReference type="RefSeq" id="WP_004086411.1">
    <property type="nucleotide sequence ID" value="NC_010513.1"/>
</dbReference>
<dbReference type="SMR" id="B0U4K3"/>
<dbReference type="GeneID" id="93905590"/>
<dbReference type="KEGG" id="xfm:Xfasm12_1905"/>
<dbReference type="HOGENOM" id="CLU_089358_1_2_6"/>
<dbReference type="UniPathway" id="UPA00275">
    <property type="reaction ID" value="UER00404"/>
</dbReference>
<dbReference type="GO" id="GO:0005829">
    <property type="term" value="C:cytosol"/>
    <property type="evidence" value="ECO:0007669"/>
    <property type="project" value="TreeGrafter"/>
</dbReference>
<dbReference type="GO" id="GO:0009349">
    <property type="term" value="C:riboflavin synthase complex"/>
    <property type="evidence" value="ECO:0007669"/>
    <property type="project" value="InterPro"/>
</dbReference>
<dbReference type="GO" id="GO:0000906">
    <property type="term" value="F:6,7-dimethyl-8-ribityllumazine synthase activity"/>
    <property type="evidence" value="ECO:0007669"/>
    <property type="project" value="UniProtKB-UniRule"/>
</dbReference>
<dbReference type="GO" id="GO:0009231">
    <property type="term" value="P:riboflavin biosynthetic process"/>
    <property type="evidence" value="ECO:0007669"/>
    <property type="project" value="UniProtKB-UniRule"/>
</dbReference>
<dbReference type="CDD" id="cd09209">
    <property type="entry name" value="Lumazine_synthase-I"/>
    <property type="match status" value="1"/>
</dbReference>
<dbReference type="Gene3D" id="3.40.50.960">
    <property type="entry name" value="Lumazine/riboflavin synthase"/>
    <property type="match status" value="1"/>
</dbReference>
<dbReference type="HAMAP" id="MF_00178">
    <property type="entry name" value="Lumazine_synth"/>
    <property type="match status" value="1"/>
</dbReference>
<dbReference type="InterPro" id="IPR034964">
    <property type="entry name" value="LS"/>
</dbReference>
<dbReference type="InterPro" id="IPR002180">
    <property type="entry name" value="LS/RS"/>
</dbReference>
<dbReference type="InterPro" id="IPR036467">
    <property type="entry name" value="LS/RS_sf"/>
</dbReference>
<dbReference type="NCBIfam" id="TIGR00114">
    <property type="entry name" value="lumazine-synth"/>
    <property type="match status" value="1"/>
</dbReference>
<dbReference type="PANTHER" id="PTHR21058:SF0">
    <property type="entry name" value="6,7-DIMETHYL-8-RIBITYLLUMAZINE SYNTHASE"/>
    <property type="match status" value="1"/>
</dbReference>
<dbReference type="PANTHER" id="PTHR21058">
    <property type="entry name" value="6,7-DIMETHYL-8-RIBITYLLUMAZINE SYNTHASE DMRL SYNTHASE LUMAZINE SYNTHASE"/>
    <property type="match status" value="1"/>
</dbReference>
<dbReference type="Pfam" id="PF00885">
    <property type="entry name" value="DMRL_synthase"/>
    <property type="match status" value="1"/>
</dbReference>
<dbReference type="SUPFAM" id="SSF52121">
    <property type="entry name" value="Lumazine synthase"/>
    <property type="match status" value="1"/>
</dbReference>
<proteinExistence type="inferred from homology"/>